<evidence type="ECO:0000250" key="1">
    <source>
        <dbReference type="UniProtKB" id="P25023"/>
    </source>
</evidence>
<evidence type="ECO:0000250" key="2">
    <source>
        <dbReference type="UniProtKB" id="P30411"/>
    </source>
</evidence>
<evidence type="ECO:0000255" key="3"/>
<evidence type="ECO:0000255" key="4">
    <source>
        <dbReference type="PROSITE-ProRule" id="PRU00521"/>
    </source>
</evidence>
<evidence type="ECO:0000269" key="5">
    <source>
    </source>
</evidence>
<protein>
    <recommendedName>
        <fullName>B2 bradykinin receptor</fullName>
        <shortName>B2R</shortName>
        <shortName>BK-2 receptor</shortName>
    </recommendedName>
</protein>
<comment type="function">
    <text evidence="5">Receptor for bradykinin. It is associated with G proteins that activate a phosphatidylinositol-calcium second messenger system.</text>
</comment>
<comment type="subunit">
    <text evidence="2">Forms a complex with PECAM1 and GNAQ. Interacts with PECAM1 (By similarity).</text>
</comment>
<comment type="subcellular location">
    <subcellularLocation>
        <location evidence="2">Cell membrane</location>
        <topology evidence="3">Multi-pass membrane protein</topology>
    </subcellularLocation>
</comment>
<comment type="similarity">
    <text evidence="4">Belongs to the G-protein coupled receptor 1 family. Bradykinin receptor subfamily. BDKRB2 sub-subfamily.</text>
</comment>
<accession>Q28642</accession>
<organism>
    <name type="scientific">Oryctolagus cuniculus</name>
    <name type="common">Rabbit</name>
    <dbReference type="NCBI Taxonomy" id="9986"/>
    <lineage>
        <taxon>Eukaryota</taxon>
        <taxon>Metazoa</taxon>
        <taxon>Chordata</taxon>
        <taxon>Craniata</taxon>
        <taxon>Vertebrata</taxon>
        <taxon>Euteleostomi</taxon>
        <taxon>Mammalia</taxon>
        <taxon>Eutheria</taxon>
        <taxon>Euarchontoglires</taxon>
        <taxon>Glires</taxon>
        <taxon>Lagomorpha</taxon>
        <taxon>Leporidae</taxon>
        <taxon>Oryctolagus</taxon>
    </lineage>
</organism>
<proteinExistence type="inferred from homology"/>
<sequence>MLNITSQVLAPALNGSVSQSSGCPNTEWSGWLNVIQAPFLWVLFVLATLENLFVLSVFCLHKSSCTVAEVYLGNLAAADLILACGLPFWAVTIANHFDWLFGEALCRVVNTMIYMNLYSSICFLMLVSIDRYLALVKTMSIGRMRRVRWAKLYSLVIWGCTLLLSSPMLVFRTMKDYRDEGYNVTACIIDYPSRSWEVFTNVLLNLVGFLLPLSVITFCTVQILQVLRNNEMQKFKEIQTERRATVLVLAVLLLFVVCWLPFQVSTFLDTLLKLGVLSSCWDEHVIDVITQVGSFMGYSNSCLNPLVYVIVGKRFRKKSREVYRAACPKAGCVLEPVQAESSMGTLRTSISVERQIHKLPEWTRSSQ</sequence>
<keyword id="KW-1003">Cell membrane</keyword>
<keyword id="KW-1015">Disulfide bond</keyword>
<keyword id="KW-0297">G-protein coupled receptor</keyword>
<keyword id="KW-0325">Glycoprotein</keyword>
<keyword id="KW-0449">Lipoprotein</keyword>
<keyword id="KW-0472">Membrane</keyword>
<keyword id="KW-0564">Palmitate</keyword>
<keyword id="KW-0597">Phosphoprotein</keyword>
<keyword id="KW-0675">Receptor</keyword>
<keyword id="KW-1185">Reference proteome</keyword>
<keyword id="KW-0807">Transducer</keyword>
<keyword id="KW-0812">Transmembrane</keyword>
<keyword id="KW-1133">Transmembrane helix</keyword>
<reference key="1">
    <citation type="journal article" date="1995" name="J. Pharmacol. Exp. Ther.">
        <title>Cloning and pharmacological characterization of the rabbit bradykinin B2 receptor.</title>
        <authorList>
            <person name="Bachvarov D.R."/>
            <person name="Saint-Jacques E."/>
            <person name="Larrivee J.F."/>
            <person name="Levesque L."/>
            <person name="Rioux F."/>
            <person name="Drapeau G."/>
            <person name="Marceau F."/>
        </authorList>
    </citation>
    <scope>NUCLEOTIDE SEQUENCE [GENOMIC DNA]</scope>
    <scope>FUNCTION</scope>
    <source>
        <tissue>Liver</tissue>
    </source>
</reference>
<gene>
    <name type="primary">BDKRB2</name>
</gene>
<feature type="chain" id="PRO_0000069193" description="B2 bradykinin receptor">
    <location>
        <begin position="1"/>
        <end position="367"/>
    </location>
</feature>
<feature type="topological domain" description="Extracellular" evidence="3">
    <location>
        <begin position="1"/>
        <end position="36"/>
    </location>
</feature>
<feature type="transmembrane region" description="Helical; Name=1" evidence="3">
    <location>
        <begin position="37"/>
        <end position="60"/>
    </location>
</feature>
<feature type="topological domain" description="Cytoplasmic" evidence="3">
    <location>
        <begin position="61"/>
        <end position="69"/>
    </location>
</feature>
<feature type="transmembrane region" description="Helical; Name=2" evidence="3">
    <location>
        <begin position="70"/>
        <end position="94"/>
    </location>
</feature>
<feature type="topological domain" description="Extracellular" evidence="3">
    <location>
        <begin position="95"/>
        <end position="107"/>
    </location>
</feature>
<feature type="transmembrane region" description="Helical; Name=3" evidence="3">
    <location>
        <begin position="108"/>
        <end position="129"/>
    </location>
</feature>
<feature type="topological domain" description="Cytoplasmic" evidence="3">
    <location>
        <begin position="130"/>
        <end position="151"/>
    </location>
</feature>
<feature type="transmembrane region" description="Helical; Name=4" evidence="3">
    <location>
        <begin position="152"/>
        <end position="174"/>
    </location>
</feature>
<feature type="topological domain" description="Extracellular" evidence="3">
    <location>
        <begin position="175"/>
        <end position="197"/>
    </location>
</feature>
<feature type="transmembrane region" description="Helical; Name=5" evidence="3">
    <location>
        <begin position="198"/>
        <end position="224"/>
    </location>
</feature>
<feature type="topological domain" description="Cytoplasmic" evidence="3">
    <location>
        <begin position="225"/>
        <end position="243"/>
    </location>
</feature>
<feature type="transmembrane region" description="Helical; Name=6" evidence="3">
    <location>
        <begin position="244"/>
        <end position="268"/>
    </location>
</feature>
<feature type="topological domain" description="Extracellular" evidence="3">
    <location>
        <begin position="269"/>
        <end position="287"/>
    </location>
</feature>
<feature type="transmembrane region" description="Helical; Name=7" evidence="3">
    <location>
        <begin position="288"/>
        <end position="311"/>
    </location>
</feature>
<feature type="topological domain" description="Cytoplasmic" evidence="3">
    <location>
        <begin position="312"/>
        <end position="367"/>
    </location>
</feature>
<feature type="modified residue" description="Phosphotyrosine" evidence="1">
    <location>
        <position position="132"/>
    </location>
</feature>
<feature type="modified residue" description="Phosphotyrosine" evidence="1">
    <location>
        <position position="323"/>
    </location>
</feature>
<feature type="modified residue" description="Phosphoserine" evidence="1">
    <location>
        <position position="342"/>
    </location>
</feature>
<feature type="modified residue" description="Phosphothreonine" evidence="1">
    <location>
        <position position="345"/>
    </location>
</feature>
<feature type="modified residue" description="Phosphoserine; by GRK6" evidence="2">
    <location>
        <position position="349"/>
    </location>
</feature>
<feature type="modified residue" description="Phosphoserine; by GRK6" evidence="2">
    <location>
        <position position="351"/>
    </location>
</feature>
<feature type="lipid moiety-binding region" description="S-palmitoyl cysteine" evidence="3">
    <location>
        <position position="327"/>
    </location>
</feature>
<feature type="glycosylation site" description="N-linked (GlcNAc...) asparagine" evidence="3">
    <location>
        <position position="3"/>
    </location>
</feature>
<feature type="glycosylation site" description="N-linked (GlcNAc...) asparagine" evidence="3">
    <location>
        <position position="14"/>
    </location>
</feature>
<feature type="glycosylation site" description="N-linked (GlcNAc...) asparagine" evidence="3">
    <location>
        <position position="183"/>
    </location>
</feature>
<feature type="disulfide bond" evidence="4">
    <location>
        <begin position="106"/>
        <end position="187"/>
    </location>
</feature>
<dbReference type="EMBL" id="U33334">
    <property type="protein sequence ID" value="AAA96149.1"/>
    <property type="molecule type" value="Genomic_DNA"/>
</dbReference>
<dbReference type="SMR" id="Q28642"/>
<dbReference type="FunCoup" id="Q28642">
    <property type="interactions" value="293"/>
</dbReference>
<dbReference type="STRING" id="9986.ENSOCUP00000012746"/>
<dbReference type="BindingDB" id="Q28642"/>
<dbReference type="ChEMBL" id="CHEMBL3453"/>
<dbReference type="GlyCosmos" id="Q28642">
    <property type="glycosylation" value="3 sites, No reported glycans"/>
</dbReference>
<dbReference type="PaxDb" id="9986-ENSOCUP00000012746"/>
<dbReference type="eggNOG" id="ENOG502QTX6">
    <property type="taxonomic scope" value="Eukaryota"/>
</dbReference>
<dbReference type="InParanoid" id="Q28642"/>
<dbReference type="Proteomes" id="UP000001811">
    <property type="component" value="Unplaced"/>
</dbReference>
<dbReference type="GO" id="GO:0009897">
    <property type="term" value="C:external side of plasma membrane"/>
    <property type="evidence" value="ECO:0007669"/>
    <property type="project" value="TreeGrafter"/>
</dbReference>
<dbReference type="GO" id="GO:0004947">
    <property type="term" value="F:bradykinin receptor activity"/>
    <property type="evidence" value="ECO:0007669"/>
    <property type="project" value="InterPro"/>
</dbReference>
<dbReference type="GO" id="GO:0019957">
    <property type="term" value="F:C-C chemokine binding"/>
    <property type="evidence" value="ECO:0007669"/>
    <property type="project" value="TreeGrafter"/>
</dbReference>
<dbReference type="GO" id="GO:0016493">
    <property type="term" value="F:C-C chemokine receptor activity"/>
    <property type="evidence" value="ECO:0007669"/>
    <property type="project" value="TreeGrafter"/>
</dbReference>
<dbReference type="GO" id="GO:0019722">
    <property type="term" value="P:calcium-mediated signaling"/>
    <property type="evidence" value="ECO:0007669"/>
    <property type="project" value="TreeGrafter"/>
</dbReference>
<dbReference type="GO" id="GO:0060326">
    <property type="term" value="P:cell chemotaxis"/>
    <property type="evidence" value="ECO:0007669"/>
    <property type="project" value="TreeGrafter"/>
</dbReference>
<dbReference type="GO" id="GO:0006955">
    <property type="term" value="P:immune response"/>
    <property type="evidence" value="ECO:0007669"/>
    <property type="project" value="TreeGrafter"/>
</dbReference>
<dbReference type="GO" id="GO:0007204">
    <property type="term" value="P:positive regulation of cytosolic calcium ion concentration"/>
    <property type="evidence" value="ECO:0007669"/>
    <property type="project" value="TreeGrafter"/>
</dbReference>
<dbReference type="GO" id="GO:0006939">
    <property type="term" value="P:smooth muscle contraction"/>
    <property type="evidence" value="ECO:0007669"/>
    <property type="project" value="InterPro"/>
</dbReference>
<dbReference type="GO" id="GO:0042310">
    <property type="term" value="P:vasoconstriction"/>
    <property type="evidence" value="ECO:0007669"/>
    <property type="project" value="InterPro"/>
</dbReference>
<dbReference type="FunFam" id="1.20.1070.10:FF:000201">
    <property type="entry name" value="Bradykinin receptor B2"/>
    <property type="match status" value="1"/>
</dbReference>
<dbReference type="Gene3D" id="1.20.1070.10">
    <property type="entry name" value="Rhodopsin 7-helix transmembrane proteins"/>
    <property type="match status" value="1"/>
</dbReference>
<dbReference type="InterPro" id="IPR001504">
    <property type="entry name" value="Brdyknn_2_rcpt"/>
</dbReference>
<dbReference type="InterPro" id="IPR000496">
    <property type="entry name" value="Brdyknn_rcpt"/>
</dbReference>
<dbReference type="InterPro" id="IPR050119">
    <property type="entry name" value="CCR1-9-like"/>
</dbReference>
<dbReference type="InterPro" id="IPR000276">
    <property type="entry name" value="GPCR_Rhodpsn"/>
</dbReference>
<dbReference type="InterPro" id="IPR017452">
    <property type="entry name" value="GPCR_Rhodpsn_7TM"/>
</dbReference>
<dbReference type="PANTHER" id="PTHR10489:SF957">
    <property type="entry name" value="B2 BRADYKININ RECEPTOR"/>
    <property type="match status" value="1"/>
</dbReference>
<dbReference type="PANTHER" id="PTHR10489">
    <property type="entry name" value="CELL ADHESION MOLECULE"/>
    <property type="match status" value="1"/>
</dbReference>
<dbReference type="Pfam" id="PF00001">
    <property type="entry name" value="7tm_1"/>
    <property type="match status" value="1"/>
</dbReference>
<dbReference type="PRINTS" id="PR00425">
    <property type="entry name" value="BRADYKININR"/>
</dbReference>
<dbReference type="PRINTS" id="PR00994">
    <property type="entry name" value="BRADYKINNB2R"/>
</dbReference>
<dbReference type="PRINTS" id="PR00237">
    <property type="entry name" value="GPCRRHODOPSN"/>
</dbReference>
<dbReference type="SUPFAM" id="SSF81321">
    <property type="entry name" value="Family A G protein-coupled receptor-like"/>
    <property type="match status" value="1"/>
</dbReference>
<dbReference type="PROSITE" id="PS00237">
    <property type="entry name" value="G_PROTEIN_RECEP_F1_1"/>
    <property type="match status" value="1"/>
</dbReference>
<dbReference type="PROSITE" id="PS50262">
    <property type="entry name" value="G_PROTEIN_RECEP_F1_2"/>
    <property type="match status" value="1"/>
</dbReference>
<name>BKRB2_RABIT</name>